<keyword id="KW-0121">Carboxypeptidase</keyword>
<keyword id="KW-1015">Disulfide bond</keyword>
<keyword id="KW-0325">Glycoprotein</keyword>
<keyword id="KW-0378">Hydrolase</keyword>
<keyword id="KW-0645">Protease</keyword>
<keyword id="KW-1185">Reference proteome</keyword>
<keyword id="KW-0732">Signal</keyword>
<keyword id="KW-0926">Vacuole</keyword>
<keyword id="KW-0865">Zymogen</keyword>
<name>CBPYA_ARTOC</name>
<dbReference type="EC" id="3.4.16.5"/>
<dbReference type="EMBL" id="DS995706">
    <property type="protein sequence ID" value="EEQ34275.1"/>
    <property type="molecule type" value="Genomic_DNA"/>
</dbReference>
<dbReference type="RefSeq" id="XP_002845130.1">
    <property type="nucleotide sequence ID" value="XM_002845084.1"/>
</dbReference>
<dbReference type="SMR" id="C5FWJ1"/>
<dbReference type="STRING" id="554155.C5FWJ1"/>
<dbReference type="ESTHER" id="artoc-cbpya">
    <property type="family name" value="Carboxypeptidase_S10"/>
</dbReference>
<dbReference type="MEROPS" id="S10.001"/>
<dbReference type="GlyCosmos" id="C5FWJ1">
    <property type="glycosylation" value="2 sites, No reported glycans"/>
</dbReference>
<dbReference type="GeneID" id="9228162"/>
<dbReference type="VEuPathDB" id="FungiDB:MCYG_07094"/>
<dbReference type="eggNOG" id="KOG1282">
    <property type="taxonomic scope" value="Eukaryota"/>
</dbReference>
<dbReference type="HOGENOM" id="CLU_008523_10_4_1"/>
<dbReference type="OMA" id="GDWMKPF"/>
<dbReference type="OrthoDB" id="443318at2759"/>
<dbReference type="Proteomes" id="UP000002035">
    <property type="component" value="Unassembled WGS sequence"/>
</dbReference>
<dbReference type="GO" id="GO:0000324">
    <property type="term" value="C:fungal-type vacuole"/>
    <property type="evidence" value="ECO:0007669"/>
    <property type="project" value="TreeGrafter"/>
</dbReference>
<dbReference type="GO" id="GO:0004185">
    <property type="term" value="F:serine-type carboxypeptidase activity"/>
    <property type="evidence" value="ECO:0007669"/>
    <property type="project" value="UniProtKB-EC"/>
</dbReference>
<dbReference type="GO" id="GO:0006508">
    <property type="term" value="P:proteolysis"/>
    <property type="evidence" value="ECO:0007669"/>
    <property type="project" value="UniProtKB-KW"/>
</dbReference>
<dbReference type="FunFam" id="1.10.287.410:FF:000001">
    <property type="entry name" value="Carboxypeptidase Y"/>
    <property type="match status" value="1"/>
</dbReference>
<dbReference type="Gene3D" id="1.10.287.410">
    <property type="match status" value="1"/>
</dbReference>
<dbReference type="Gene3D" id="3.40.50.1820">
    <property type="entry name" value="alpha/beta hydrolase"/>
    <property type="match status" value="1"/>
</dbReference>
<dbReference type="InterPro" id="IPR029058">
    <property type="entry name" value="AB_hydrolase_fold"/>
</dbReference>
<dbReference type="InterPro" id="IPR001563">
    <property type="entry name" value="Peptidase_S10"/>
</dbReference>
<dbReference type="InterPro" id="IPR018202">
    <property type="entry name" value="Ser_caboxypep_ser_AS"/>
</dbReference>
<dbReference type="PANTHER" id="PTHR11802:SF113">
    <property type="entry name" value="SERINE CARBOXYPEPTIDASE CTSA-4.1"/>
    <property type="match status" value="1"/>
</dbReference>
<dbReference type="PANTHER" id="PTHR11802">
    <property type="entry name" value="SERINE PROTEASE FAMILY S10 SERINE CARBOXYPEPTIDASE"/>
    <property type="match status" value="1"/>
</dbReference>
<dbReference type="Pfam" id="PF00450">
    <property type="entry name" value="Peptidase_S10"/>
    <property type="match status" value="1"/>
</dbReference>
<dbReference type="PRINTS" id="PR00724">
    <property type="entry name" value="CRBOXYPTASEC"/>
</dbReference>
<dbReference type="SUPFAM" id="SSF53474">
    <property type="entry name" value="alpha/beta-Hydrolases"/>
    <property type="match status" value="1"/>
</dbReference>
<dbReference type="PROSITE" id="PS00131">
    <property type="entry name" value="CARBOXYPEPT_SER_SER"/>
    <property type="match status" value="1"/>
</dbReference>
<reference key="1">
    <citation type="journal article" date="2012" name="MBio">
        <title>Comparative genome analysis of Trichophyton rubrum and related dermatophytes reveals candidate genes involved in infection.</title>
        <authorList>
            <person name="Martinez D.A."/>
            <person name="Oliver B.G."/>
            <person name="Graeser Y."/>
            <person name="Goldberg J.M."/>
            <person name="Li W."/>
            <person name="Martinez-Rossi N.M."/>
            <person name="Monod M."/>
            <person name="Shelest E."/>
            <person name="Barton R.C."/>
            <person name="Birch E."/>
            <person name="Brakhage A.A."/>
            <person name="Chen Z."/>
            <person name="Gurr S.J."/>
            <person name="Heiman D."/>
            <person name="Heitman J."/>
            <person name="Kosti I."/>
            <person name="Rossi A."/>
            <person name="Saif S."/>
            <person name="Samalova M."/>
            <person name="Saunders C.W."/>
            <person name="Shea T."/>
            <person name="Summerbell R.C."/>
            <person name="Xu J."/>
            <person name="Young S."/>
            <person name="Zeng Q."/>
            <person name="Birren B.W."/>
            <person name="Cuomo C.A."/>
            <person name="White T.C."/>
        </authorList>
    </citation>
    <scope>NUCLEOTIDE SEQUENCE [LARGE SCALE GENOMIC DNA]</scope>
    <source>
        <strain>ATCC MYA-4605 / CBS 113480</strain>
    </source>
</reference>
<comment type="function">
    <text evidence="1">Vacuolar carboxypeptidase involved in degradation of small peptides. Digests preferentially peptides containing an aliphatic or hydrophobic residue in P1' position, as well as methionine, leucine or phenylalanine in P1 position of ester substrate (By similarity).</text>
</comment>
<comment type="catalytic activity">
    <reaction evidence="3">
        <text>Release of a C-terminal amino acid with broad specificity.</text>
        <dbReference type="EC" id="3.4.16.5"/>
    </reaction>
</comment>
<comment type="subcellular location">
    <subcellularLocation>
        <location evidence="1">Vacuole</location>
    </subcellularLocation>
</comment>
<comment type="similarity">
    <text evidence="4">Belongs to the peptidase S10 family.</text>
</comment>
<proteinExistence type="inferred from homology"/>
<organism>
    <name type="scientific">Arthroderma otae (strain ATCC MYA-4605 / CBS 113480)</name>
    <name type="common">Microsporum canis</name>
    <dbReference type="NCBI Taxonomy" id="554155"/>
    <lineage>
        <taxon>Eukaryota</taxon>
        <taxon>Fungi</taxon>
        <taxon>Dikarya</taxon>
        <taxon>Ascomycota</taxon>
        <taxon>Pezizomycotina</taxon>
        <taxon>Eurotiomycetes</taxon>
        <taxon>Eurotiomycetidae</taxon>
        <taxon>Onygenales</taxon>
        <taxon>Arthrodermataceae</taxon>
        <taxon>Microsporum</taxon>
    </lineage>
</organism>
<gene>
    <name type="primary">CPYA</name>
    <name type="ORF">MCYG_07094</name>
</gene>
<protein>
    <recommendedName>
        <fullName>Carboxypeptidase Y homolog A</fullName>
        <ecNumber>3.4.16.5</ecNumber>
    </recommendedName>
</protein>
<accession>C5FWJ1</accession>
<feature type="signal peptide" evidence="2">
    <location>
        <begin position="1"/>
        <end position="17"/>
    </location>
</feature>
<feature type="propeptide" id="PRO_0000407428" evidence="1">
    <location>
        <begin position="18"/>
        <end position="122"/>
    </location>
</feature>
<feature type="chain" id="PRO_0000407429" description="Carboxypeptidase Y homolog A">
    <location>
        <begin position="123"/>
        <end position="541"/>
    </location>
</feature>
<feature type="active site" evidence="3">
    <location>
        <position position="264"/>
    </location>
</feature>
<feature type="active site" evidence="3">
    <location>
        <position position="456"/>
    </location>
</feature>
<feature type="active site" evidence="3">
    <location>
        <position position="518"/>
    </location>
</feature>
<feature type="glycosylation site" description="N-linked (GlcNAc...) asparagine" evidence="2">
    <location>
        <position position="208"/>
    </location>
</feature>
<feature type="glycosylation site" description="N-linked (GlcNAc...) asparagine" evidence="2">
    <location>
        <position position="507"/>
    </location>
</feature>
<feature type="disulfide bond" evidence="1">
    <location>
        <begin position="177"/>
        <end position="417"/>
    </location>
</feature>
<feature type="disulfide bond" evidence="1">
    <location>
        <begin position="311"/>
        <end position="325"/>
    </location>
</feature>
<feature type="disulfide bond" evidence="1">
    <location>
        <begin position="335"/>
        <end position="358"/>
    </location>
</feature>
<feature type="disulfide bond" evidence="1">
    <location>
        <begin position="342"/>
        <end position="351"/>
    </location>
</feature>
<feature type="disulfide bond" evidence="1">
    <location>
        <begin position="380"/>
        <end position="387"/>
    </location>
</feature>
<sequence length="541" mass="60467">MKLLMTGLLASAAVAAAQEQQVLQAEGSAQQQPAPSIFDETLKQFESGLEEGITHFWSEMKTNFKHYLPLISVPKEHTRRADSEWDHVVRGADVESVWVQGANGEKHREIDGKLQSYDLRVKAVDPAELGIDPGVKQYSGYLDDNETDKHLFYWFFESRNDPKNDPVVLWLNGGPGCSSLTGLFLELGPATIDKNLKIVPNPYSWNSNASVIFLDQPVNVGFSYSGSSVSDTVAAGKDIYALLTLFFKQFPEYATQDFHISGESYAGHYIPVFASEILSHKNTNINLKSVLIGNGLTDPLTQYPQYRPMACGDGGYPAVLDQGTCRSMDNSLERCLSLIETCYSSESAWVCVPAAMYCNSAIIGPYQQTGMNPYDVRSKCEDMSSLCYPQLNTITEWLNQKSVMKALGVEVESYESCNGGINRDFLFHGDWMKPYHRLVPSLLEKIPVLIYAGDADFICNWLGNLAWTNALEWPGHKKFADAKMNDLKIVDNKSKGKKIGQVKSSGNFTFMRIFGAGHMVPLNQPEASLEFFNRWLRGEWR</sequence>
<evidence type="ECO:0000250" key="1"/>
<evidence type="ECO:0000255" key="2"/>
<evidence type="ECO:0000255" key="3">
    <source>
        <dbReference type="PROSITE-ProRule" id="PRU10074"/>
    </source>
</evidence>
<evidence type="ECO:0000305" key="4"/>